<reference key="1">
    <citation type="journal article" date="2011" name="Mol. Biol. Cell">
        <title>MICAL-like1 mediates epidermal growth factor receptor endocytosis.</title>
        <authorList>
            <person name="Abou-Zeid N."/>
            <person name="Pandjaitan R."/>
            <person name="Sengmanivong L."/>
            <person name="David V."/>
            <person name="Le Pavec G."/>
            <person name="Salamero J."/>
            <person name="Zahraoui A."/>
        </authorList>
    </citation>
    <scope>NUCLEOTIDE SEQUENCE [MRNA]</scope>
    <scope>FUNCTION IN ENDOCYTOSIS</scope>
    <scope>INTERACTION WITH RAB13</scope>
    <scope>SUBCELLULAR LOCATION</scope>
    <scope>DOMAIN</scope>
    <source>
        <tissue>Uterine adenocarcinoma</tissue>
    </source>
</reference>
<reference key="2">
    <citation type="journal article" date="2004" name="Genome Biol.">
        <title>A genome annotation-driven approach to cloning the human ORFeome.</title>
        <authorList>
            <person name="Collins J.E."/>
            <person name="Wright C.L."/>
            <person name="Edwards C.A."/>
            <person name="Davis M.P."/>
            <person name="Grinham J.A."/>
            <person name="Cole C.G."/>
            <person name="Goward M.E."/>
            <person name="Aguado B."/>
            <person name="Mallya M."/>
            <person name="Mokrab Y."/>
            <person name="Huckle E.J."/>
            <person name="Beare D.M."/>
            <person name="Dunham I."/>
        </authorList>
    </citation>
    <scope>NUCLEOTIDE SEQUENCE [LARGE SCALE MRNA]</scope>
</reference>
<reference key="3">
    <citation type="journal article" date="1999" name="Nature">
        <title>The DNA sequence of human chromosome 22.</title>
        <authorList>
            <person name="Dunham I."/>
            <person name="Hunt A.R."/>
            <person name="Collins J.E."/>
            <person name="Bruskiewich R."/>
            <person name="Beare D.M."/>
            <person name="Clamp M."/>
            <person name="Smink L.J."/>
            <person name="Ainscough R."/>
            <person name="Almeida J.P."/>
            <person name="Babbage A.K."/>
            <person name="Bagguley C."/>
            <person name="Bailey J."/>
            <person name="Barlow K.F."/>
            <person name="Bates K.N."/>
            <person name="Beasley O.P."/>
            <person name="Bird C.P."/>
            <person name="Blakey S.E."/>
            <person name="Bridgeman A.M."/>
            <person name="Buck D."/>
            <person name="Burgess J."/>
            <person name="Burrill W.D."/>
            <person name="Burton J."/>
            <person name="Carder C."/>
            <person name="Carter N.P."/>
            <person name="Chen Y."/>
            <person name="Clark G."/>
            <person name="Clegg S.M."/>
            <person name="Cobley V.E."/>
            <person name="Cole C.G."/>
            <person name="Collier R.E."/>
            <person name="Connor R."/>
            <person name="Conroy D."/>
            <person name="Corby N.R."/>
            <person name="Coville G.J."/>
            <person name="Cox A.V."/>
            <person name="Davis J."/>
            <person name="Dawson E."/>
            <person name="Dhami P.D."/>
            <person name="Dockree C."/>
            <person name="Dodsworth S.J."/>
            <person name="Durbin R.M."/>
            <person name="Ellington A.G."/>
            <person name="Evans K.L."/>
            <person name="Fey J.M."/>
            <person name="Fleming K."/>
            <person name="French L."/>
            <person name="Garner A.A."/>
            <person name="Gilbert J.G.R."/>
            <person name="Goward M.E."/>
            <person name="Grafham D.V."/>
            <person name="Griffiths M.N.D."/>
            <person name="Hall C."/>
            <person name="Hall R.E."/>
            <person name="Hall-Tamlyn G."/>
            <person name="Heathcott R.W."/>
            <person name="Ho S."/>
            <person name="Holmes S."/>
            <person name="Hunt S.E."/>
            <person name="Jones M.C."/>
            <person name="Kershaw J."/>
            <person name="Kimberley A.M."/>
            <person name="King A."/>
            <person name="Laird G.K."/>
            <person name="Langford C.F."/>
            <person name="Leversha M.A."/>
            <person name="Lloyd C."/>
            <person name="Lloyd D.M."/>
            <person name="Martyn I.D."/>
            <person name="Mashreghi-Mohammadi M."/>
            <person name="Matthews L.H."/>
            <person name="Mccann O.T."/>
            <person name="Mcclay J."/>
            <person name="Mclaren S."/>
            <person name="McMurray A.A."/>
            <person name="Milne S.A."/>
            <person name="Mortimore B.J."/>
            <person name="Odell C.N."/>
            <person name="Pavitt R."/>
            <person name="Pearce A.V."/>
            <person name="Pearson D."/>
            <person name="Phillimore B.J.C.T."/>
            <person name="Phillips S.H."/>
            <person name="Plumb R.W."/>
            <person name="Ramsay H."/>
            <person name="Ramsey Y."/>
            <person name="Rogers L."/>
            <person name="Ross M.T."/>
            <person name="Scott C.E."/>
            <person name="Sehra H.K."/>
            <person name="Skuce C.D."/>
            <person name="Smalley S."/>
            <person name="Smith M.L."/>
            <person name="Soderlund C."/>
            <person name="Spragon L."/>
            <person name="Steward C.A."/>
            <person name="Sulston J.E."/>
            <person name="Swann R.M."/>
            <person name="Vaudin M."/>
            <person name="Wall M."/>
            <person name="Wallis J.M."/>
            <person name="Whiteley M.N."/>
            <person name="Willey D.L."/>
            <person name="Williams L."/>
            <person name="Williams S.A."/>
            <person name="Williamson H."/>
            <person name="Wilmer T.E."/>
            <person name="Wilming L."/>
            <person name="Wright C.L."/>
            <person name="Hubbard T."/>
            <person name="Bentley D.R."/>
            <person name="Beck S."/>
            <person name="Rogers J."/>
            <person name="Shimizu N."/>
            <person name="Minoshima S."/>
            <person name="Kawasaki K."/>
            <person name="Sasaki T."/>
            <person name="Asakawa S."/>
            <person name="Kudoh J."/>
            <person name="Shintani A."/>
            <person name="Shibuya K."/>
            <person name="Yoshizaki Y."/>
            <person name="Aoki N."/>
            <person name="Mitsuyama S."/>
            <person name="Roe B.A."/>
            <person name="Chen F."/>
            <person name="Chu L."/>
            <person name="Crabtree J."/>
            <person name="Deschamps S."/>
            <person name="Do A."/>
            <person name="Do T."/>
            <person name="Dorman A."/>
            <person name="Fang F."/>
            <person name="Fu Y."/>
            <person name="Hu P."/>
            <person name="Hua A."/>
            <person name="Kenton S."/>
            <person name="Lai H."/>
            <person name="Lao H.I."/>
            <person name="Lewis J."/>
            <person name="Lewis S."/>
            <person name="Lin S.-P."/>
            <person name="Loh P."/>
            <person name="Malaj E."/>
            <person name="Nguyen T."/>
            <person name="Pan H."/>
            <person name="Phan S."/>
            <person name="Qi S."/>
            <person name="Qian Y."/>
            <person name="Ray L."/>
            <person name="Ren Q."/>
            <person name="Shaull S."/>
            <person name="Sloan D."/>
            <person name="Song L."/>
            <person name="Wang Q."/>
            <person name="Wang Y."/>
            <person name="Wang Z."/>
            <person name="White J."/>
            <person name="Willingham D."/>
            <person name="Wu H."/>
            <person name="Yao Z."/>
            <person name="Zhan M."/>
            <person name="Zhang G."/>
            <person name="Chissoe S."/>
            <person name="Murray J."/>
            <person name="Miller N."/>
            <person name="Minx P."/>
            <person name="Fulton R."/>
            <person name="Johnson D."/>
            <person name="Bemis G."/>
            <person name="Bentley D."/>
            <person name="Bradshaw H."/>
            <person name="Bourne S."/>
            <person name="Cordes M."/>
            <person name="Du Z."/>
            <person name="Fulton L."/>
            <person name="Goela D."/>
            <person name="Graves T."/>
            <person name="Hawkins J."/>
            <person name="Hinds K."/>
            <person name="Kemp K."/>
            <person name="Latreille P."/>
            <person name="Layman D."/>
            <person name="Ozersky P."/>
            <person name="Rohlfing T."/>
            <person name="Scheet P."/>
            <person name="Walker C."/>
            <person name="Wamsley A."/>
            <person name="Wohldmann P."/>
            <person name="Pepin K."/>
            <person name="Nelson J."/>
            <person name="Korf I."/>
            <person name="Bedell J.A."/>
            <person name="Hillier L.W."/>
            <person name="Mardis E."/>
            <person name="Waterston R."/>
            <person name="Wilson R."/>
            <person name="Emanuel B.S."/>
            <person name="Shaikh T."/>
            <person name="Kurahashi H."/>
            <person name="Saitta S."/>
            <person name="Budarf M.L."/>
            <person name="McDermid H.E."/>
            <person name="Johnson A."/>
            <person name="Wong A.C.C."/>
            <person name="Morrow B.E."/>
            <person name="Edelmann L."/>
            <person name="Kim U.J."/>
            <person name="Shizuya H."/>
            <person name="Simon M.I."/>
            <person name="Dumanski J.P."/>
            <person name="Peyrard M."/>
            <person name="Kedra D."/>
            <person name="Seroussi E."/>
            <person name="Fransson I."/>
            <person name="Tapia I."/>
            <person name="Bruder C.E."/>
            <person name="O'Brien K.P."/>
            <person name="Wilkinson P."/>
            <person name="Bodenteich A."/>
            <person name="Hartman K."/>
            <person name="Hu X."/>
            <person name="Khan A.S."/>
            <person name="Lane L."/>
            <person name="Tilahun Y."/>
            <person name="Wright H."/>
        </authorList>
    </citation>
    <scope>NUCLEOTIDE SEQUENCE [LARGE SCALE GENOMIC DNA]</scope>
</reference>
<reference key="4">
    <citation type="journal article" date="2007" name="BMC Genomics">
        <title>The full-ORF clone resource of the German cDNA consortium.</title>
        <authorList>
            <person name="Bechtel S."/>
            <person name="Rosenfelder H."/>
            <person name="Duda A."/>
            <person name="Schmidt C.P."/>
            <person name="Ernst U."/>
            <person name="Wellenreuther R."/>
            <person name="Mehrle A."/>
            <person name="Schuster C."/>
            <person name="Bahr A."/>
            <person name="Bloecker H."/>
            <person name="Heubner D."/>
            <person name="Hoerlein A."/>
            <person name="Michel G."/>
            <person name="Wedler H."/>
            <person name="Koehrer K."/>
            <person name="Ottenwaelder B."/>
            <person name="Poustka A."/>
            <person name="Wiemann S."/>
            <person name="Schupp I."/>
        </authorList>
    </citation>
    <scope>NUCLEOTIDE SEQUENCE [LARGE SCALE MRNA] OF 25-863</scope>
    <scope>VARIANT SER-519</scope>
    <source>
        <tissue>Melanoma</tissue>
    </source>
</reference>
<reference key="5">
    <citation type="journal article" date="2001" name="DNA Res.">
        <title>Identification of novel transcribed sequences on human chromosome 22 by expressed sequence tag mapping.</title>
        <authorList>
            <person name="Hirosawa M."/>
            <person name="Nagase T."/>
            <person name="Murahashi Y."/>
            <person name="Kikuno R."/>
            <person name="Ohara O."/>
        </authorList>
    </citation>
    <scope>NUCLEOTIDE SEQUENCE [LARGE SCALE MRNA] OF 73-863</scope>
    <source>
        <tissue>Brain</tissue>
    </source>
</reference>
<reference key="6">
    <citation type="journal article" date="2004" name="Genome Res.">
        <title>The status, quality, and expansion of the NIH full-length cDNA project: the Mammalian Gene Collection (MGC).</title>
        <authorList>
            <consortium name="The MGC Project Team"/>
        </authorList>
    </citation>
    <scope>NUCLEOTIDE SEQUENCE [LARGE SCALE MRNA] OF 514-863</scope>
    <source>
        <tissue>Choriocarcinoma</tissue>
    </source>
</reference>
<reference key="7">
    <citation type="journal article" date="2002" name="Cell">
        <title>MICALs, a family of conserved flavoprotein oxidoreductases, function in plexin-mediated axonal repulsion.</title>
        <authorList>
            <person name="Terman J.R."/>
            <person name="Mao T."/>
            <person name="Pasterkamp R.J."/>
            <person name="Yu H.-H."/>
            <person name="Kolodkin A.L."/>
        </authorList>
    </citation>
    <scope>GENE STRUCTURE</scope>
</reference>
<reference key="8">
    <citation type="journal article" date="2008" name="Proc. Natl. Acad. Sci. U.S.A.">
        <title>A quantitative atlas of mitotic phosphorylation.</title>
        <authorList>
            <person name="Dephoure N."/>
            <person name="Zhou C."/>
            <person name="Villen J."/>
            <person name="Beausoleil S.A."/>
            <person name="Bakalarski C.E."/>
            <person name="Elledge S.J."/>
            <person name="Gygi S.P."/>
        </authorList>
    </citation>
    <scope>PHOSPHORYLATION [LARGE SCALE ANALYSIS] AT SER-295; SER-309; THR-318; THR-467; SER-471; SER-484 AND SER-486</scope>
    <scope>IDENTIFICATION BY MASS SPECTROMETRY [LARGE SCALE ANALYSIS]</scope>
    <source>
        <tissue>Cervix carcinoma</tissue>
    </source>
</reference>
<reference key="9">
    <citation type="journal article" date="2009" name="Anal. Chem.">
        <title>Lys-N and trypsin cover complementary parts of the phosphoproteome in a refined SCX-based approach.</title>
        <authorList>
            <person name="Gauci S."/>
            <person name="Helbig A.O."/>
            <person name="Slijper M."/>
            <person name="Krijgsveld J."/>
            <person name="Heck A.J."/>
            <person name="Mohammed S."/>
        </authorList>
    </citation>
    <scope>IDENTIFICATION BY MASS SPECTROMETRY [LARGE SCALE ANALYSIS]</scope>
</reference>
<reference key="10">
    <citation type="journal article" date="2009" name="Mol. Biol. Cell">
        <title>MICAL-L1 links EHD1 to tubular recycling endosomes and regulates receptor recycling.</title>
        <authorList>
            <person name="Sharma M."/>
            <person name="Giridharan S.S."/>
            <person name="Rahajeng J."/>
            <person name="Naslavsky N."/>
            <person name="Caplan S."/>
        </authorList>
    </citation>
    <scope>FUNCTION IN ENDOCYTIC RECYCLING</scope>
    <scope>INTERACTION WITH EHD1; EHD3 AND RAB8A</scope>
    <scope>SUBCELLULAR LOCATION</scope>
    <scope>MUTAGENESIS OF 425-ASN--PHE-427; 633-ASN--PHE-635 AND 721-MET--PHE-726</scope>
</reference>
<reference key="11">
    <citation type="journal article" date="2009" name="Sci. Signal.">
        <title>Quantitative phosphoproteomic analysis of T cell receptor signaling reveals system-wide modulation of protein-protein interactions.</title>
        <authorList>
            <person name="Mayya V."/>
            <person name="Lundgren D.H."/>
            <person name="Hwang S.-I."/>
            <person name="Rezaul K."/>
            <person name="Wu L."/>
            <person name="Eng J.K."/>
            <person name="Rodionov V."/>
            <person name="Han D.K."/>
        </authorList>
    </citation>
    <scope>PHOSPHORYLATION [LARGE SCALE ANALYSIS] AT SER-578</scope>
    <scope>IDENTIFICATION BY MASS SPECTROMETRY [LARGE SCALE ANALYSIS]</scope>
    <source>
        <tissue>Leukemic T-cell</tissue>
    </source>
</reference>
<reference key="12">
    <citation type="journal article" date="2010" name="J. Biol. Chem.">
        <title>Collapsin response mediator protein-2 (Crmp2) regulates trafficking by linking endocytic regulatory proteins to dynein motors.</title>
        <authorList>
            <person name="Rahajeng J."/>
            <person name="Giridharan S.S."/>
            <person name="Naslavsky N."/>
            <person name="Caplan S."/>
        </authorList>
    </citation>
    <scope>FUNCTION IN ENDOCYTOSIS</scope>
    <scope>INTERACTION WITH DPYSL2</scope>
</reference>
<reference key="13">
    <citation type="journal article" date="2010" name="Sci. Signal.">
        <title>Quantitative phosphoproteomics reveals widespread full phosphorylation site occupancy during mitosis.</title>
        <authorList>
            <person name="Olsen J.V."/>
            <person name="Vermeulen M."/>
            <person name="Santamaria A."/>
            <person name="Kumar C."/>
            <person name="Miller M.L."/>
            <person name="Jensen L.J."/>
            <person name="Gnad F."/>
            <person name="Cox J."/>
            <person name="Jensen T.S."/>
            <person name="Nigg E.A."/>
            <person name="Brunak S."/>
            <person name="Mann M."/>
        </authorList>
    </citation>
    <scope>PHOSPHORYLATION [LARGE SCALE ANALYSIS] AT THR-467; THR-469; SER-470; SER-471; SER-484; SER-486 AND SER-578</scope>
    <scope>IDENTIFICATION BY MASS SPECTROMETRY [LARGE SCALE ANALYSIS]</scope>
    <source>
        <tissue>Cervix carcinoma</tissue>
    </source>
</reference>
<reference key="14">
    <citation type="journal article" date="2011" name="BMC Syst. Biol.">
        <title>Initial characterization of the human central proteome.</title>
        <authorList>
            <person name="Burkard T.R."/>
            <person name="Planyavsky M."/>
            <person name="Kaupe I."/>
            <person name="Breitwieser F.P."/>
            <person name="Buerckstuemmer T."/>
            <person name="Bennett K.L."/>
            <person name="Superti-Furga G."/>
            <person name="Colinge J."/>
        </authorList>
    </citation>
    <scope>IDENTIFICATION BY MASS SPECTROMETRY [LARGE SCALE ANALYSIS]</scope>
</reference>
<reference key="15">
    <citation type="journal article" date="2012" name="Traffic">
        <title>MICAL-L1 is a tubular endosomal membrane hub that connects Rab35 and Arf6 with Rab8a.</title>
        <authorList>
            <person name="Rahajeng J."/>
            <person name="Giridharan S.S."/>
            <person name="Cai B."/>
            <person name="Naslavsky N."/>
            <person name="Caplan S."/>
        </authorList>
    </citation>
    <scope>INTERACTION WITH ARF6 AND RAB35</scope>
    <scope>SUBCELLULAR LOCATION</scope>
</reference>
<reference key="16">
    <citation type="journal article" date="2013" name="J. Proteome Res.">
        <title>Toward a comprehensive characterization of a human cancer cell phosphoproteome.</title>
        <authorList>
            <person name="Zhou H."/>
            <person name="Di Palma S."/>
            <person name="Preisinger C."/>
            <person name="Peng M."/>
            <person name="Polat A.N."/>
            <person name="Heck A.J."/>
            <person name="Mohammed S."/>
        </authorList>
    </citation>
    <scope>PHOSPHORYLATION [LARGE SCALE ANALYSIS] AT SER-295; SER-391; THR-467; SER-471; SER-484; SER-486; SER-578 AND SER-621</scope>
    <scope>IDENTIFICATION BY MASS SPECTROMETRY [LARGE SCALE ANALYSIS]</scope>
    <source>
        <tissue>Cervix carcinoma</tissue>
        <tissue>Erythroleukemia</tissue>
    </source>
</reference>
<reference key="17">
    <citation type="journal article" date="2013" name="Mol. Biol. Cell">
        <title>Cooperation of MICAL-L1, syndapin2, and phosphatidic acid in tubular recycling endosome biogenesis.</title>
        <authorList>
            <person name="Giridharan S.S."/>
            <person name="Cai B."/>
            <person name="Vitale N."/>
            <person name="Naslavsky N."/>
            <person name="Caplan S."/>
        </authorList>
    </citation>
    <scope>FUNCTION IN MEMBRANE TUBULATION</scope>
    <scope>LIPID-BINDING</scope>
    <scope>HOMOOLIGOMERIZATION</scope>
    <scope>INTERACTION WITH EHD1 AND PACSIN2</scope>
    <scope>MUTAGENESIS OF 385-PRO--PRO-387 AND 480-PRO--PRO-483</scope>
</reference>
<reference key="18">
    <citation type="journal article" date="2014" name="J. Proteomics">
        <title>An enzyme assisted RP-RPLC approach for in-depth analysis of human liver phosphoproteome.</title>
        <authorList>
            <person name="Bian Y."/>
            <person name="Song C."/>
            <person name="Cheng K."/>
            <person name="Dong M."/>
            <person name="Wang F."/>
            <person name="Huang J."/>
            <person name="Sun D."/>
            <person name="Wang L."/>
            <person name="Ye M."/>
            <person name="Zou H."/>
        </authorList>
    </citation>
    <scope>IDENTIFICATION BY MASS SPECTROMETRY [LARGE SCALE ANALYSIS]</scope>
    <source>
        <tissue>Liver</tissue>
    </source>
</reference>
<reference key="19">
    <citation type="journal article" date="2019" name="J. Cell Sci.">
        <title>MICAL-L1 coordinates ciliogenesis by recruiting EHD1 to the primary cilium.</title>
        <authorList>
            <person name="Xie S."/>
            <person name="Farmer T."/>
            <person name="Naslavsky N."/>
            <person name="Caplan S."/>
        </authorList>
    </citation>
    <scope>FUNCTION</scope>
    <scope>SUBCELLULAR LOCATION</scope>
    <scope>INTERACTION WITH EHD1</scope>
</reference>
<reference key="20">
    <citation type="journal article" date="2021" name="Biol. Open">
        <title>MICAL-L1 is required for cargo protein delivery to the cell surface.</title>
        <authorList>
            <person name="Sikora R."/>
            <person name="Bun P."/>
            <person name="Danglot L."/>
            <person name="Alqabandi M."/>
            <person name="Bassereau P."/>
            <person name="Niedergang F."/>
            <person name="Galli T."/>
            <person name="Zahraoui A."/>
        </authorList>
    </citation>
    <scope>FUNCTION</scope>
    <scope>LIPID-BINDING</scope>
    <scope>INTERACTION WITH RAB8A AND RAB13</scope>
    <scope>MUTAGENESIS OF 742-LEU-ILE-743</scope>
    <scope>SUBCELLULAR LOCATION</scope>
</reference>
<reference key="21">
    <citation type="journal article" date="2010" name="J. Biol. Chem.">
        <title>Mechanism for the selective interaction of C-terminal Eps15 homology domain proteins with specific Asn-Pro-Phe-containing partners.</title>
        <authorList>
            <person name="Kieken F."/>
            <person name="Sharma M."/>
            <person name="Jovic M."/>
            <person name="Giridharan S.S."/>
            <person name="Naslavsky N."/>
            <person name="Caplan S."/>
            <person name="Sorgen P.L."/>
        </authorList>
    </citation>
    <scope>STRUCTURE BY NMR OF 419-433 IN COMPLEX WITH EHD1</scope>
    <scope>MUTAGENESIS OF 428-GLU--GLU-430</scope>
</reference>
<reference key="22">
    <citation type="journal article" date="2006" name="Science">
        <title>The consensus coding sequences of human breast and colorectal cancers.</title>
        <authorList>
            <person name="Sjoeblom T."/>
            <person name="Jones S."/>
            <person name="Wood L.D."/>
            <person name="Parsons D.W."/>
            <person name="Lin J."/>
            <person name="Barber T.D."/>
            <person name="Mandelker D."/>
            <person name="Leary R.J."/>
            <person name="Ptak J."/>
            <person name="Silliman N."/>
            <person name="Szabo S."/>
            <person name="Buckhaults P."/>
            <person name="Farrell C."/>
            <person name="Meeh P."/>
            <person name="Markowitz S.D."/>
            <person name="Willis J."/>
            <person name="Dawson D."/>
            <person name="Willson J.K.V."/>
            <person name="Gazdar A.F."/>
            <person name="Hartigan J."/>
            <person name="Wu L."/>
            <person name="Liu C."/>
            <person name="Parmigiani G."/>
            <person name="Park B.H."/>
            <person name="Bachman K.E."/>
            <person name="Papadopoulos N."/>
            <person name="Vogelstein B."/>
            <person name="Kinzler K.W."/>
            <person name="Velculescu V.E."/>
        </authorList>
    </citation>
    <scope>VARIANT [LARGE SCALE ANALYSIS] LYS-817</scope>
</reference>
<feature type="chain" id="PRO_0000075848" description="MICAL-like protein 1">
    <location>
        <begin position="1"/>
        <end position="863"/>
    </location>
</feature>
<feature type="domain" description="Calponin-homology (CH)" evidence="3">
    <location>
        <begin position="2"/>
        <end position="108"/>
    </location>
</feature>
<feature type="domain" description="LIM zinc-binding" evidence="4">
    <location>
        <begin position="162"/>
        <end position="225"/>
    </location>
</feature>
<feature type="domain" description="bMERB" evidence="5">
    <location>
        <begin position="671"/>
        <end position="818"/>
    </location>
</feature>
<feature type="region of interest" description="Disordered" evidence="6">
    <location>
        <begin position="119"/>
        <end position="162"/>
    </location>
</feature>
<feature type="region of interest" description="Disordered" evidence="6">
    <location>
        <begin position="224"/>
        <end position="670"/>
    </location>
</feature>
<feature type="region of interest" description="Mediates the interaction with RAB13 and RAB35 and intramolecular interaction with the CH domain" evidence="12 13">
    <location>
        <begin position="652"/>
        <end position="863"/>
    </location>
</feature>
<feature type="region of interest" description="Necessary and sufficient to associate with tubular recycling endosome membranes, mediate phosphatidic acid-binding and membrane tubulation">
    <location>
        <begin position="700"/>
        <end position="863"/>
    </location>
</feature>
<feature type="coiled-coil region" evidence="2">
    <location>
        <begin position="682"/>
        <end position="711"/>
    </location>
</feature>
<feature type="coiled-coil region" evidence="2">
    <location>
        <begin position="785"/>
        <end position="830"/>
    </location>
</feature>
<feature type="short sequence motif" description="NPF1">
    <location>
        <begin position="425"/>
        <end position="427"/>
    </location>
</feature>
<feature type="short sequence motif" description="NPF2">
    <location>
        <begin position="633"/>
        <end position="635"/>
    </location>
</feature>
<feature type="compositionally biased region" description="Pro residues" evidence="6">
    <location>
        <begin position="125"/>
        <end position="135"/>
    </location>
</feature>
<feature type="compositionally biased region" description="Low complexity" evidence="6">
    <location>
        <begin position="143"/>
        <end position="159"/>
    </location>
</feature>
<feature type="compositionally biased region" description="Low complexity" evidence="6">
    <location>
        <begin position="224"/>
        <end position="244"/>
    </location>
</feature>
<feature type="compositionally biased region" description="Polar residues" evidence="6">
    <location>
        <begin position="325"/>
        <end position="340"/>
    </location>
</feature>
<feature type="compositionally biased region" description="Pro residues" evidence="6">
    <location>
        <begin position="384"/>
        <end position="395"/>
    </location>
</feature>
<feature type="compositionally biased region" description="Acidic residues" evidence="6">
    <location>
        <begin position="427"/>
        <end position="438"/>
    </location>
</feature>
<feature type="compositionally biased region" description="Low complexity" evidence="6">
    <location>
        <begin position="439"/>
        <end position="450"/>
    </location>
</feature>
<feature type="compositionally biased region" description="Low complexity" evidence="6">
    <location>
        <begin position="482"/>
        <end position="495"/>
    </location>
</feature>
<feature type="compositionally biased region" description="Low complexity" evidence="6">
    <location>
        <begin position="505"/>
        <end position="520"/>
    </location>
</feature>
<feature type="compositionally biased region" description="Low complexity" evidence="6">
    <location>
        <begin position="553"/>
        <end position="566"/>
    </location>
</feature>
<feature type="compositionally biased region" description="Low complexity" evidence="6">
    <location>
        <begin position="638"/>
        <end position="656"/>
    </location>
</feature>
<feature type="modified residue" description="Phosphoserine" evidence="18 21">
    <location>
        <position position="295"/>
    </location>
</feature>
<feature type="modified residue" description="Phosphoserine" evidence="18">
    <location>
        <position position="309"/>
    </location>
</feature>
<feature type="modified residue" description="Phosphothreonine" evidence="18">
    <location>
        <position position="318"/>
    </location>
</feature>
<feature type="modified residue" description="Phosphoserine" evidence="21">
    <location>
        <position position="391"/>
    </location>
</feature>
<feature type="modified residue" description="Phosphothreonine" evidence="18 20 21">
    <location>
        <position position="467"/>
    </location>
</feature>
<feature type="modified residue" description="Phosphothreonine" evidence="20">
    <location>
        <position position="469"/>
    </location>
</feature>
<feature type="modified residue" description="Phosphoserine" evidence="20">
    <location>
        <position position="470"/>
    </location>
</feature>
<feature type="modified residue" description="Phosphoserine" evidence="18 20 21">
    <location>
        <position position="471"/>
    </location>
</feature>
<feature type="modified residue" description="Phosphoserine" evidence="18 20 21">
    <location>
        <position position="484"/>
    </location>
</feature>
<feature type="modified residue" description="Phosphoserine" evidence="18 20 21">
    <location>
        <position position="486"/>
    </location>
</feature>
<feature type="modified residue" description="Phosphoserine" evidence="19 20 21">
    <location>
        <position position="578"/>
    </location>
</feature>
<feature type="modified residue" description="Phosphoserine" evidence="21">
    <location>
        <position position="621"/>
    </location>
</feature>
<feature type="modified residue" description="Phosphoserine" evidence="1">
    <location>
        <position position="740"/>
    </location>
</feature>
<feature type="sequence variant" id="VAR_018262" description="In dbSNP:rs9610875." evidence="8">
    <original>A</original>
    <variation>S</variation>
    <location>
        <position position="519"/>
    </location>
</feature>
<feature type="sequence variant" id="VAR_020258" description="In dbSNP:rs2272829.">
    <original>P</original>
    <variation>L</variation>
    <location>
        <position position="583"/>
    </location>
</feature>
<feature type="sequence variant" id="VAR_050158" description="In dbSNP:rs34834842.">
    <original>H</original>
    <variation>R</variation>
    <location>
        <position position="685"/>
    </location>
</feature>
<feature type="sequence variant" id="VAR_036192" description="In a breast cancer sample; somatic mutation." evidence="7">
    <original>E</original>
    <variation>K</variation>
    <location>
        <position position="817"/>
    </location>
</feature>
<feature type="mutagenesis site" description="No effect on interaction with PACSIN2. Loss of interaction with PACSIN2; when associated with 480-A--A-483." evidence="14">
    <original>PLP</original>
    <variation>ALA</variation>
    <location>
        <begin position="385"/>
        <end position="387"/>
    </location>
</feature>
<feature type="mutagenesis site" description="Partial loss of interaction with EHD1. Complete loss of interaction with EHD1; when associated with 633-A--A-635." evidence="9">
    <original>NPF</original>
    <variation>APA</variation>
    <location>
        <begin position="425"/>
        <end position="427"/>
    </location>
</feature>
<feature type="mutagenesis site" description="Strongly reduces interaction with EHD1." evidence="10">
    <original>EEE</original>
    <variation>AAA</variation>
    <location>
        <begin position="428"/>
        <end position="430"/>
    </location>
</feature>
<feature type="mutagenesis site" description="No effect on interaction with PACSIN2. Loss of interaction with PACSIN2; when associated with 385-A--A-387." evidence="14">
    <original>PRAP</original>
    <variation>ARAA</variation>
    <location>
        <begin position="480"/>
        <end position="483"/>
    </location>
</feature>
<feature type="mutagenesis site" description="No effect on interaction with EHD1. Complete loss of interaction with EHD1; when associated with 425-A--A-427." evidence="9">
    <original>NPF</original>
    <variation>APA</variation>
    <location>
        <begin position="633"/>
        <end position="635"/>
    </location>
</feature>
<feature type="mutagenesis site" description="Altered association with membranes." evidence="9">
    <original>MLVDWF</original>
    <variation>AAAAAA</variation>
    <location>
        <begin position="721"/>
        <end position="726"/>
    </location>
</feature>
<feature type="mutagenesis site" description="Loss of binding to phosphatidic acid and association with membrane tubules. No effect on interaction with RAB8A and RAB13." evidence="16">
    <original>LI</original>
    <variation>AA</variation>
    <location>
        <begin position="742"/>
        <end position="743"/>
    </location>
</feature>
<feature type="sequence conflict" description="In Ref. 5; BAB33338." evidence="17" ref="5">
    <original>P</original>
    <variation>S</variation>
    <location>
        <position position="137"/>
    </location>
</feature>
<feature type="sequence conflict" description="In Ref. 4; CAD39036." evidence="17" ref="4">
    <original>F</original>
    <variation>Y</variation>
    <location>
        <position position="212"/>
    </location>
</feature>
<comment type="function">
    <text evidence="1 9 11 12 14 15 16">Lipid-binding protein with higher affinity for phosphatidic acid, a lipid enriched in recycling endosome membranes. On endosome membranes, acts as a downstream effector of Rab proteins recruiting cytosolic proteins to regulate membrane tubulation (PubMed:19864458, PubMed:20801876, PubMed:23596323, PubMed:34100897). Involved in a late step of receptor-mediated endocytosis regulating for instance endocytosed-EGF receptor trafficking (PubMed:21795389). Alternatively, regulates slow endocytic recycling of endocytosed proteins back to the plasma membrane (PubMed:19864458). Also involved in cargo protein delivery to the plasma membrane (PubMed:34100897). Plays a role in ciliogenesis coordination, recruits EHD1 to primary cilium where it is anchored to the centriole through interaction with tubulins (PubMed:31615969). May indirectly play a role in neurite outgrowth (By similarity).</text>
</comment>
<comment type="subunit">
    <text evidence="9 10 11 12 13 14 15 16">Homooligomer (PubMed:23596323). Interacts (via NPF1 motif) with EHD1 (via EH domain); the interaction is direct and probably recruits EHD1 to membranes (PubMed:19864458, PubMed:20106972, PubMed:23596323, PubMed:31615969). Interacts with EHD3 (via EH domain) (PubMed:19864458). Interacts with RAB35 (GTP-bound form); the interaction is direct and probably recruits MICALL1 to membranes. Interacts with ACAP2; the interaction is indirect through RAB35 (PubMed:21951725). Interacts with RAB8A (GTP-bound form); regulates RAB8A association with recycling endosomes (PubMed:19864458, PubMed:34100897). Interacts with RAB13 (GTP-bound form) (PubMed:21795389, PubMed:34100897). Interacts with ARF6 (GTP-bound form) (PubMed:21951725). Interacts with PACSIN2 (via the SH3 domain) (PubMed:23596323). Interacts with DPYSL2 (PubMed:20801876).</text>
</comment>
<comment type="interaction">
    <interactant intactId="EBI-1056885">
        <id>Q8N3F8</id>
    </interactant>
    <interactant intactId="EBI-490691">
        <id>Q9H4M9</id>
        <label>EHD1</label>
    </interactant>
    <organismsDiffer>false</organismsDiffer>
    <experiments>13</experiments>
</comment>
<comment type="interaction">
    <interactant intactId="EBI-1056885">
        <id>Q8N3F8</id>
    </interactant>
    <interactant intactId="EBI-2870749">
        <id>Q9NZN3</id>
        <label>EHD3</label>
    </interactant>
    <organismsDiffer>false</organismsDiffer>
    <experiments>6</experiments>
</comment>
<comment type="interaction">
    <interactant intactId="EBI-1056885">
        <id>Q8N3F8</id>
    </interactant>
    <interactant intactId="EBI-1050573">
        <id>Q9H223</id>
        <label>EHD4</label>
    </interactant>
    <organismsDiffer>false</organismsDiffer>
    <experiments>2</experiments>
</comment>
<comment type="interaction">
    <interactant intactId="EBI-1056885">
        <id>Q8N3F8</id>
    </interactant>
    <interactant intactId="EBI-722275">
        <id>Q15286</id>
        <label>RAB35</label>
    </interactant>
    <organismsDiffer>false</organismsDiffer>
    <experiments>2</experiments>
</comment>
<comment type="interaction">
    <interactant intactId="EBI-1056885">
        <id>Q8N3F8</id>
    </interactant>
    <interactant intactId="EBI-26359852">
        <id>Q5ZXN6</id>
        <label>ankX</label>
    </interactant>
    <organismsDiffer>true</organismsDiffer>
    <experiments>2</experiments>
</comment>
<comment type="interaction">
    <interactant intactId="EBI-1056885">
        <id>Q8N3F8</id>
    </interactant>
    <interactant intactId="EBI-8783505">
        <id>O02675</id>
        <label>DPYSL2</label>
    </interactant>
    <organismsDiffer>true</organismsDiffer>
    <experiments>2</experiments>
</comment>
<comment type="subcellular location">
    <subcellularLocation>
        <location evidence="9 13 16">Recycling endosome membrane</location>
        <topology evidence="9 16">Peripheral membrane protein</topology>
    </subcellularLocation>
    <subcellularLocation>
        <location>Late endosome membrane</location>
    </subcellularLocation>
    <subcellularLocation>
        <location evidence="15">Cell projection</location>
        <location evidence="15">Cilium membrane</location>
        <topology evidence="15">Peripheral membrane protein</topology>
    </subcellularLocation>
    <subcellularLocation>
        <location evidence="15">Cytoplasm</location>
        <location evidence="15">Cytoskeleton</location>
        <location evidence="15">Microtubule organizing center</location>
        <location evidence="15">Centrosome</location>
        <location evidence="15">Centriole</location>
    </subcellularLocation>
    <text evidence="13 15">Localization to late endosomes is actin-dependent. Association to tubular recycling endosomes is regulated by RAB35 and ARF6 (PubMed:21951725). Interaction with tubulins achors MICALL1 to the centriole (PubMed:31615969).</text>
</comment>
<comment type="domain">
    <text evidence="12">Probably exists in a closed and an opened conformation due to interaction of the C-terminal RAB-binding domain (RBD), also described as bivalent Mical/EHBP Rab binding (bMERB) domain, with the N-terminal calponin-homology (CH) domain. The conformational change is regulated by RAB13 and may modulate MICALL1 interactions with functional partners.</text>
</comment>
<comment type="sequence caution" evidence="17">
    <conflict type="frameshift">
        <sequence resource="EMBL-CDS" id="CAD39036"/>
    </conflict>
</comment>
<protein>
    <recommendedName>
        <fullName>MICAL-like protein 1</fullName>
    </recommendedName>
    <alternativeName>
        <fullName>Molecule interacting with Rab13</fullName>
        <shortName>MIRab13</shortName>
    </alternativeName>
</protein>
<evidence type="ECO:0000250" key="1">
    <source>
        <dbReference type="UniProtKB" id="Q8BGT6"/>
    </source>
</evidence>
<evidence type="ECO:0000255" key="2"/>
<evidence type="ECO:0000255" key="3">
    <source>
        <dbReference type="PROSITE-ProRule" id="PRU00044"/>
    </source>
</evidence>
<evidence type="ECO:0000255" key="4">
    <source>
        <dbReference type="PROSITE-ProRule" id="PRU00125"/>
    </source>
</evidence>
<evidence type="ECO:0000255" key="5">
    <source>
        <dbReference type="PROSITE-ProRule" id="PRU01195"/>
    </source>
</evidence>
<evidence type="ECO:0000256" key="6">
    <source>
        <dbReference type="SAM" id="MobiDB-lite"/>
    </source>
</evidence>
<evidence type="ECO:0000269" key="7">
    <source>
    </source>
</evidence>
<evidence type="ECO:0000269" key="8">
    <source>
    </source>
</evidence>
<evidence type="ECO:0000269" key="9">
    <source>
    </source>
</evidence>
<evidence type="ECO:0000269" key="10">
    <source>
    </source>
</evidence>
<evidence type="ECO:0000269" key="11">
    <source>
    </source>
</evidence>
<evidence type="ECO:0000269" key="12">
    <source>
    </source>
</evidence>
<evidence type="ECO:0000269" key="13">
    <source>
    </source>
</evidence>
<evidence type="ECO:0000269" key="14">
    <source>
    </source>
</evidence>
<evidence type="ECO:0000269" key="15">
    <source>
    </source>
</evidence>
<evidence type="ECO:0000269" key="16">
    <source>
    </source>
</evidence>
<evidence type="ECO:0000305" key="17"/>
<evidence type="ECO:0007744" key="18">
    <source>
    </source>
</evidence>
<evidence type="ECO:0007744" key="19">
    <source>
    </source>
</evidence>
<evidence type="ECO:0007744" key="20">
    <source>
    </source>
</evidence>
<evidence type="ECO:0007744" key="21">
    <source>
    </source>
</evidence>
<sequence>MAGPRGALLAWCRRQCEGYRGVEIRDLSSSFRDGLAFCAILHRHRPDLLDFDSLSKDNVFENNRLAFEVAEKELGIPALLDPNDMVSMSVPDCLSIMTYVSQYYNHFCSPGQAGVSPPRKGLAPCSPPSVAPTPVEPEDVAQGEELSSGSLSEQGTGQTPSSTCAACQQHVHLVQRYLADGRLYHRHCFRCRRCSSTLLPGAYENGPEEGTFVCAEHCARLGPGTRSGTRPGPFSQPKQQHQQQLAEDAKDVPGGGPSSSAPAGAEADGPKASPEARPQIPTKPRVPGKLQELASPPAGRPTPAPRKASESTTPAPPTPRPRSSLQQENLVEQAGSSSLVNGRLHELPVPKPRGTPKPSEGTPAPRKDPPWITLVQAEPKKKPAPLPPSSSPGPPSQDSRQVENGGTEEVAQPSPTASLESKPYNPFEEEEEDKEEEAPAAPSLATSPALGHPESTPKSLHPWYGITPTSSPKTKKRPAPRAPSASPLALHASRLSHSEPPSATPSPALSVESLSSESASQTAGAELLEPPAVPKSSSEPAVHAPGTPGNPVSLSTNSSLASSGELVEPRVEQMPQASPGLAPRTRGSSGPQPAKPCSGATPTPLLLVGDRSPVPSPGSSSPQLQVKSSCKENPFNRKPSPAASPATKKATKGSKPVRPPAPGHGFPLIKRKVQADQYIPEEDIHGEMDTIERRLDALEHRGVLLEEKLRGGLNEGREDDMLVDWFKLIHEKHLLVRRESELIYVFKQQNLEQRQADVEYELRCLLNKPEKDWTEEDRAREKVLMQELVTLIEQRNAIINCLDEDRQREEEEDKMLEAMIKKKEFQREAEPEGKKKGKFKTMKMLKLLGNKRDAKSKSPRDKS</sequence>
<name>MILK1_HUMAN</name>
<keyword id="KW-0002">3D-structure</keyword>
<keyword id="KW-1003">Cell membrane</keyword>
<keyword id="KW-0966">Cell projection</keyword>
<keyword id="KW-0175">Coiled coil</keyword>
<keyword id="KW-0963">Cytoplasm</keyword>
<keyword id="KW-0206">Cytoskeleton</keyword>
<keyword id="KW-0254">Endocytosis</keyword>
<keyword id="KW-0967">Endosome</keyword>
<keyword id="KW-0440">LIM domain</keyword>
<keyword id="KW-0472">Membrane</keyword>
<keyword id="KW-0479">Metal-binding</keyword>
<keyword id="KW-0597">Phosphoprotein</keyword>
<keyword id="KW-0653">Protein transport</keyword>
<keyword id="KW-1267">Proteomics identification</keyword>
<keyword id="KW-1185">Reference proteome</keyword>
<keyword id="KW-0813">Transport</keyword>
<keyword id="KW-0862">Zinc</keyword>
<dbReference type="EMBL" id="AJ496196">
    <property type="protein sequence ID" value="CAD42713.1"/>
    <property type="molecule type" value="mRNA"/>
</dbReference>
<dbReference type="EMBL" id="CR456437">
    <property type="protein sequence ID" value="CAG30323.1"/>
    <property type="molecule type" value="mRNA"/>
</dbReference>
<dbReference type="EMBL" id="AL022311">
    <property type="status" value="NOT_ANNOTATED_CDS"/>
    <property type="molecule type" value="Genomic_DNA"/>
</dbReference>
<dbReference type="EMBL" id="AL834373">
    <property type="protein sequence ID" value="CAD39036.1"/>
    <property type="status" value="ALT_FRAME"/>
    <property type="molecule type" value="mRNA"/>
</dbReference>
<dbReference type="EMBL" id="AL833860">
    <property type="protein sequence ID" value="CAD38718.1"/>
    <property type="molecule type" value="mRNA"/>
</dbReference>
<dbReference type="EMBL" id="AB051455">
    <property type="protein sequence ID" value="BAB33338.1"/>
    <property type="molecule type" value="mRNA"/>
</dbReference>
<dbReference type="EMBL" id="BC001090">
    <property type="protein sequence ID" value="AAH01090.2"/>
    <property type="molecule type" value="mRNA"/>
</dbReference>
<dbReference type="EMBL" id="BK000466">
    <property type="protein sequence ID" value="DAA01345.1"/>
    <property type="molecule type" value="mRNA"/>
</dbReference>
<dbReference type="CCDS" id="CCDS13961.1"/>
<dbReference type="RefSeq" id="NP_203744.1">
    <property type="nucleotide sequence ID" value="NM_033386.4"/>
</dbReference>
<dbReference type="PDB" id="2KSP">
    <property type="method" value="NMR"/>
    <property type="chains" value="B=419-433"/>
</dbReference>
<dbReference type="PDBsum" id="2KSP"/>
<dbReference type="SMR" id="Q8N3F8"/>
<dbReference type="BioGRID" id="124504">
    <property type="interactions" value="114"/>
</dbReference>
<dbReference type="CORUM" id="Q8N3F8"/>
<dbReference type="FunCoup" id="Q8N3F8">
    <property type="interactions" value="506"/>
</dbReference>
<dbReference type="IntAct" id="Q8N3F8">
    <property type="interactions" value="49"/>
</dbReference>
<dbReference type="MINT" id="Q8N3F8"/>
<dbReference type="STRING" id="9606.ENSP00000215957"/>
<dbReference type="GlyGen" id="Q8N3F8">
    <property type="glycosylation" value="8 sites, 1 O-linked glycan (1 site)"/>
</dbReference>
<dbReference type="iPTMnet" id="Q8N3F8"/>
<dbReference type="PhosphoSitePlus" id="Q8N3F8"/>
<dbReference type="BioMuta" id="MICALL1"/>
<dbReference type="DMDM" id="30173085"/>
<dbReference type="jPOST" id="Q8N3F8"/>
<dbReference type="MassIVE" id="Q8N3F8"/>
<dbReference type="PaxDb" id="9606-ENSP00000215957"/>
<dbReference type="PeptideAtlas" id="Q8N3F8"/>
<dbReference type="ProteomicsDB" id="71798"/>
<dbReference type="Pumba" id="Q8N3F8"/>
<dbReference type="Antibodypedia" id="26174">
    <property type="antibodies" value="138 antibodies from 21 providers"/>
</dbReference>
<dbReference type="DNASU" id="85377"/>
<dbReference type="Ensembl" id="ENST00000215957.10">
    <property type="protein sequence ID" value="ENSP00000215957.6"/>
    <property type="gene ID" value="ENSG00000100139.14"/>
</dbReference>
<dbReference type="GeneID" id="85377"/>
<dbReference type="KEGG" id="hsa:85377"/>
<dbReference type="MANE-Select" id="ENST00000215957.10">
    <property type="protein sequence ID" value="ENSP00000215957.6"/>
    <property type="RefSeq nucleotide sequence ID" value="NM_033386.4"/>
    <property type="RefSeq protein sequence ID" value="NP_203744.1"/>
</dbReference>
<dbReference type="UCSC" id="uc003aui.4">
    <property type="organism name" value="human"/>
</dbReference>
<dbReference type="AGR" id="HGNC:29804"/>
<dbReference type="CTD" id="85377"/>
<dbReference type="DisGeNET" id="85377"/>
<dbReference type="GeneCards" id="MICALL1"/>
<dbReference type="HGNC" id="HGNC:29804">
    <property type="gene designation" value="MICALL1"/>
</dbReference>
<dbReference type="HPA" id="ENSG00000100139">
    <property type="expression patterns" value="Low tissue specificity"/>
</dbReference>
<dbReference type="MIM" id="619563">
    <property type="type" value="gene"/>
</dbReference>
<dbReference type="neXtProt" id="NX_Q8N3F8"/>
<dbReference type="OpenTargets" id="ENSG00000100139"/>
<dbReference type="PharmGKB" id="PA162395891"/>
<dbReference type="VEuPathDB" id="HostDB:ENSG00000100139"/>
<dbReference type="eggNOG" id="ENOG502QWQX">
    <property type="taxonomic scope" value="Eukaryota"/>
</dbReference>
<dbReference type="GeneTree" id="ENSGT00940000156057"/>
<dbReference type="HOGENOM" id="CLU_015382_1_0_1"/>
<dbReference type="InParanoid" id="Q8N3F8"/>
<dbReference type="OMA" id="GHNKSTH"/>
<dbReference type="OrthoDB" id="8062037at2759"/>
<dbReference type="PAN-GO" id="Q8N3F8">
    <property type="GO annotations" value="0 GO annotations based on evolutionary models"/>
</dbReference>
<dbReference type="PhylomeDB" id="Q8N3F8"/>
<dbReference type="TreeFam" id="TF328311"/>
<dbReference type="PathwayCommons" id="Q8N3F8"/>
<dbReference type="SignaLink" id="Q8N3F8"/>
<dbReference type="BioGRID-ORCS" id="85377">
    <property type="hits" value="26 hits in 1153 CRISPR screens"/>
</dbReference>
<dbReference type="ChiTaRS" id="MICALL1">
    <property type="organism name" value="human"/>
</dbReference>
<dbReference type="GeneWiki" id="MICALL1"/>
<dbReference type="GenomeRNAi" id="85377"/>
<dbReference type="Pharos" id="Q8N3F8">
    <property type="development level" value="Tbio"/>
</dbReference>
<dbReference type="PRO" id="PR:Q8N3F8"/>
<dbReference type="Proteomes" id="UP000005640">
    <property type="component" value="Chromosome 22"/>
</dbReference>
<dbReference type="RNAct" id="Q8N3F8">
    <property type="molecule type" value="protein"/>
</dbReference>
<dbReference type="Bgee" id="ENSG00000100139">
    <property type="expression patterns" value="Expressed in cervix squamous epithelium and 177 other cell types or tissues"/>
</dbReference>
<dbReference type="ExpressionAtlas" id="Q8N3F8">
    <property type="expression patterns" value="baseline and differential"/>
</dbReference>
<dbReference type="GO" id="GO:0005912">
    <property type="term" value="C:adherens junction"/>
    <property type="evidence" value="ECO:0000250"/>
    <property type="project" value="UniProt"/>
</dbReference>
<dbReference type="GO" id="GO:0005814">
    <property type="term" value="C:centriole"/>
    <property type="evidence" value="ECO:0000314"/>
    <property type="project" value="UniProtKB"/>
</dbReference>
<dbReference type="GO" id="GO:0060170">
    <property type="term" value="C:ciliary membrane"/>
    <property type="evidence" value="ECO:0007669"/>
    <property type="project" value="UniProtKB-SubCell"/>
</dbReference>
<dbReference type="GO" id="GO:0005929">
    <property type="term" value="C:cilium"/>
    <property type="evidence" value="ECO:0000314"/>
    <property type="project" value="UniProtKB"/>
</dbReference>
<dbReference type="GO" id="GO:0010009">
    <property type="term" value="C:cytoplasmic side of endosome membrane"/>
    <property type="evidence" value="ECO:0000314"/>
    <property type="project" value="UniProtKB"/>
</dbReference>
<dbReference type="GO" id="GO:0005770">
    <property type="term" value="C:late endosome"/>
    <property type="evidence" value="ECO:0000314"/>
    <property type="project" value="UniProtKB"/>
</dbReference>
<dbReference type="GO" id="GO:0031902">
    <property type="term" value="C:late endosome membrane"/>
    <property type="evidence" value="ECO:0007669"/>
    <property type="project" value="UniProtKB-SubCell"/>
</dbReference>
<dbReference type="GO" id="GO:0055038">
    <property type="term" value="C:recycling endosome membrane"/>
    <property type="evidence" value="ECO:0000314"/>
    <property type="project" value="UniProtKB"/>
</dbReference>
<dbReference type="GO" id="GO:0045296">
    <property type="term" value="F:cadherin binding"/>
    <property type="evidence" value="ECO:0007005"/>
    <property type="project" value="BHF-UCL"/>
</dbReference>
<dbReference type="GO" id="GO:0008093">
    <property type="term" value="F:cytoskeletal anchor activity"/>
    <property type="evidence" value="ECO:0000314"/>
    <property type="project" value="UniProtKB"/>
</dbReference>
<dbReference type="GO" id="GO:0042802">
    <property type="term" value="F:identical protein binding"/>
    <property type="evidence" value="ECO:0000353"/>
    <property type="project" value="UniProtKB"/>
</dbReference>
<dbReference type="GO" id="GO:0046872">
    <property type="term" value="F:metal ion binding"/>
    <property type="evidence" value="ECO:0007669"/>
    <property type="project" value="UniProtKB-KW"/>
</dbReference>
<dbReference type="GO" id="GO:0070300">
    <property type="term" value="F:phosphatidic acid binding"/>
    <property type="evidence" value="ECO:0000314"/>
    <property type="project" value="UniProtKB"/>
</dbReference>
<dbReference type="GO" id="GO:0030674">
    <property type="term" value="F:protein-macromolecule adaptor activity"/>
    <property type="evidence" value="ECO:0000250"/>
    <property type="project" value="UniProt"/>
</dbReference>
<dbReference type="GO" id="GO:0031267">
    <property type="term" value="F:small GTPase binding"/>
    <property type="evidence" value="ECO:0000353"/>
    <property type="project" value="UniProtKB"/>
</dbReference>
<dbReference type="GO" id="GO:0002042">
    <property type="term" value="P:cell migration involved in sprouting angiogenesis"/>
    <property type="evidence" value="ECO:0000250"/>
    <property type="project" value="UniProt"/>
</dbReference>
<dbReference type="GO" id="GO:0060271">
    <property type="term" value="P:cilium assembly"/>
    <property type="evidence" value="ECO:0000314"/>
    <property type="project" value="UniProtKB"/>
</dbReference>
<dbReference type="GO" id="GO:0032456">
    <property type="term" value="P:endocytic recycling"/>
    <property type="evidence" value="ECO:0000315"/>
    <property type="project" value="UniProtKB"/>
</dbReference>
<dbReference type="GO" id="GO:0006897">
    <property type="term" value="P:endocytosis"/>
    <property type="evidence" value="ECO:0000315"/>
    <property type="project" value="UniProtKB"/>
</dbReference>
<dbReference type="GO" id="GO:0031175">
    <property type="term" value="P:neuron projection development"/>
    <property type="evidence" value="ECO:0000250"/>
    <property type="project" value="UniProtKB"/>
</dbReference>
<dbReference type="GO" id="GO:0097320">
    <property type="term" value="P:plasma membrane tubulation"/>
    <property type="evidence" value="ECO:0000314"/>
    <property type="project" value="UniProtKB"/>
</dbReference>
<dbReference type="GO" id="GO:0061512">
    <property type="term" value="P:protein localization to cilium"/>
    <property type="evidence" value="ECO:0000314"/>
    <property type="project" value="UniProtKB"/>
</dbReference>
<dbReference type="GO" id="GO:0036010">
    <property type="term" value="P:protein localization to endosome"/>
    <property type="evidence" value="ECO:0000315"/>
    <property type="project" value="UniProtKB"/>
</dbReference>
<dbReference type="GO" id="GO:0006612">
    <property type="term" value="P:protein targeting to membrane"/>
    <property type="evidence" value="ECO:0000315"/>
    <property type="project" value="UniProtKB"/>
</dbReference>
<dbReference type="GO" id="GO:0015031">
    <property type="term" value="P:protein transport"/>
    <property type="evidence" value="ECO:0007669"/>
    <property type="project" value="UniProtKB-KW"/>
</dbReference>
<dbReference type="GO" id="GO:0006898">
    <property type="term" value="P:receptor-mediated endocytosis"/>
    <property type="evidence" value="ECO:0000315"/>
    <property type="project" value="UniProtKB"/>
</dbReference>
<dbReference type="GO" id="GO:0032458">
    <property type="term" value="P:slow endocytic recycling"/>
    <property type="evidence" value="ECO:0000315"/>
    <property type="project" value="UniProtKB"/>
</dbReference>
<dbReference type="CDD" id="cd21252">
    <property type="entry name" value="CH_MICALL1"/>
    <property type="match status" value="1"/>
</dbReference>
<dbReference type="CDD" id="cd09444">
    <property type="entry name" value="LIM_Mical_like_1"/>
    <property type="match status" value="1"/>
</dbReference>
<dbReference type="FunFam" id="2.10.110.10:FF:000100">
    <property type="entry name" value="MICAL-like protein 1"/>
    <property type="match status" value="1"/>
</dbReference>
<dbReference type="FunFam" id="1.10.418.10:FF:000055">
    <property type="entry name" value="MICAL-like protein 2"/>
    <property type="match status" value="1"/>
</dbReference>
<dbReference type="Gene3D" id="1.10.418.10">
    <property type="entry name" value="Calponin-like domain"/>
    <property type="match status" value="1"/>
</dbReference>
<dbReference type="Gene3D" id="2.10.110.10">
    <property type="entry name" value="Cysteine Rich Protein"/>
    <property type="match status" value="1"/>
</dbReference>
<dbReference type="InterPro" id="IPR022735">
    <property type="entry name" value="bMERB_dom"/>
</dbReference>
<dbReference type="InterPro" id="IPR001715">
    <property type="entry name" value="CH_dom"/>
</dbReference>
<dbReference type="InterPro" id="IPR036872">
    <property type="entry name" value="CH_dom_sf"/>
</dbReference>
<dbReference type="InterPro" id="IPR050540">
    <property type="entry name" value="F-actin_Monoox_Mical"/>
</dbReference>
<dbReference type="InterPro" id="IPR001781">
    <property type="entry name" value="Znf_LIM"/>
</dbReference>
<dbReference type="PANTHER" id="PTHR23167">
    <property type="entry name" value="CALPONIN HOMOLOGY DOMAIN-CONTAINING PROTEIN DDB_G0272472-RELATED"/>
    <property type="match status" value="1"/>
</dbReference>
<dbReference type="PANTHER" id="PTHR23167:SF89">
    <property type="entry name" value="MICAL-LIKE PROTEIN 1"/>
    <property type="match status" value="1"/>
</dbReference>
<dbReference type="Pfam" id="PF12130">
    <property type="entry name" value="bMERB_dom"/>
    <property type="match status" value="1"/>
</dbReference>
<dbReference type="Pfam" id="PF00307">
    <property type="entry name" value="CH"/>
    <property type="match status" value="1"/>
</dbReference>
<dbReference type="Pfam" id="PF00412">
    <property type="entry name" value="LIM"/>
    <property type="match status" value="1"/>
</dbReference>
<dbReference type="SMART" id="SM00033">
    <property type="entry name" value="CH"/>
    <property type="match status" value="1"/>
</dbReference>
<dbReference type="SMART" id="SM01203">
    <property type="entry name" value="DUF3585"/>
    <property type="match status" value="1"/>
</dbReference>
<dbReference type="SMART" id="SM00132">
    <property type="entry name" value="LIM"/>
    <property type="match status" value="1"/>
</dbReference>
<dbReference type="SUPFAM" id="SSF47576">
    <property type="entry name" value="Calponin-homology domain, CH-domain"/>
    <property type="match status" value="1"/>
</dbReference>
<dbReference type="SUPFAM" id="SSF57716">
    <property type="entry name" value="Glucocorticoid receptor-like (DNA-binding domain)"/>
    <property type="match status" value="2"/>
</dbReference>
<dbReference type="PROSITE" id="PS51848">
    <property type="entry name" value="BMERB"/>
    <property type="match status" value="1"/>
</dbReference>
<dbReference type="PROSITE" id="PS50021">
    <property type="entry name" value="CH"/>
    <property type="match status" value="1"/>
</dbReference>
<dbReference type="PROSITE" id="PS00478">
    <property type="entry name" value="LIM_DOMAIN_1"/>
    <property type="match status" value="1"/>
</dbReference>
<dbReference type="PROSITE" id="PS50023">
    <property type="entry name" value="LIM_DOMAIN_2"/>
    <property type="match status" value="1"/>
</dbReference>
<organism>
    <name type="scientific">Homo sapiens</name>
    <name type="common">Human</name>
    <dbReference type="NCBI Taxonomy" id="9606"/>
    <lineage>
        <taxon>Eukaryota</taxon>
        <taxon>Metazoa</taxon>
        <taxon>Chordata</taxon>
        <taxon>Craniata</taxon>
        <taxon>Vertebrata</taxon>
        <taxon>Euteleostomi</taxon>
        <taxon>Mammalia</taxon>
        <taxon>Eutheria</taxon>
        <taxon>Euarchontoglires</taxon>
        <taxon>Primates</taxon>
        <taxon>Haplorrhini</taxon>
        <taxon>Catarrhini</taxon>
        <taxon>Hominidae</taxon>
        <taxon>Homo</taxon>
    </lineage>
</organism>
<gene>
    <name type="primary">MICALL1</name>
    <name type="synonym">KIAA1668</name>
    <name type="synonym">MIRAB13</name>
</gene>
<proteinExistence type="evidence at protein level"/>
<accession>Q8N3F8</accession>
<accession>Q5TI16</accession>
<accession>Q7RTP5</accession>
<accession>Q8N3N8</accession>
<accession>Q9BVL9</accession>
<accession>Q9BY92</accession>
<accession>Q9UH43</accession>
<accession>Q9UH44</accession>
<accession>Q9UH45</accession>